<accession>Q2FEK5</accession>
<protein>
    <recommendedName>
        <fullName evidence="1">Urease subunit gamma</fullName>
        <ecNumber evidence="1">3.5.1.5</ecNumber>
    </recommendedName>
    <alternativeName>
        <fullName evidence="1">Urea amidohydrolase subunit gamma</fullName>
    </alternativeName>
</protein>
<proteinExistence type="inferred from homology"/>
<gene>
    <name evidence="1" type="primary">ureA</name>
    <name type="ordered locus">SAUSA300_2238</name>
</gene>
<keyword id="KW-0963">Cytoplasm</keyword>
<keyword id="KW-0378">Hydrolase</keyword>
<sequence>MHFTQREQDKLMIVVAAEVARRRKARGLKLNHPEALALISDELLEGARDGKTVAELMSYGRQILNKEDVMDGVEHMITDIEIEATFPDGTKLITVHHPIV</sequence>
<feature type="chain" id="PRO_0000239915" description="Urease subunit gamma">
    <location>
        <begin position="1"/>
        <end position="100"/>
    </location>
</feature>
<comment type="catalytic activity">
    <reaction evidence="1">
        <text>urea + 2 H2O + H(+) = hydrogencarbonate + 2 NH4(+)</text>
        <dbReference type="Rhea" id="RHEA:20557"/>
        <dbReference type="ChEBI" id="CHEBI:15377"/>
        <dbReference type="ChEBI" id="CHEBI:15378"/>
        <dbReference type="ChEBI" id="CHEBI:16199"/>
        <dbReference type="ChEBI" id="CHEBI:17544"/>
        <dbReference type="ChEBI" id="CHEBI:28938"/>
        <dbReference type="EC" id="3.5.1.5"/>
    </reaction>
</comment>
<comment type="pathway">
    <text evidence="1">Nitrogen metabolism; urea degradation; CO(2) and NH(3) from urea (urease route): step 1/1.</text>
</comment>
<comment type="subunit">
    <text evidence="1">Heterotrimer of UreA (gamma), UreB (beta) and UreC (alpha) subunits. Three heterotrimers associate to form the active enzyme.</text>
</comment>
<comment type="subcellular location">
    <subcellularLocation>
        <location evidence="1">Cytoplasm</location>
    </subcellularLocation>
</comment>
<comment type="similarity">
    <text evidence="1">Belongs to the urease gamma subunit family.</text>
</comment>
<dbReference type="EC" id="3.5.1.5" evidence="1"/>
<dbReference type="EMBL" id="CP000255">
    <property type="protein sequence ID" value="ABD21596.1"/>
    <property type="molecule type" value="Genomic_DNA"/>
</dbReference>
<dbReference type="RefSeq" id="WP_000545928.1">
    <property type="nucleotide sequence ID" value="NZ_CP027476.1"/>
</dbReference>
<dbReference type="SMR" id="Q2FEK5"/>
<dbReference type="KEGG" id="saa:SAUSA300_2238"/>
<dbReference type="HOGENOM" id="CLU_145825_1_0_9"/>
<dbReference type="OMA" id="MQLTPHE"/>
<dbReference type="UniPathway" id="UPA00258">
    <property type="reaction ID" value="UER00370"/>
</dbReference>
<dbReference type="Proteomes" id="UP000001939">
    <property type="component" value="Chromosome"/>
</dbReference>
<dbReference type="GO" id="GO:0005737">
    <property type="term" value="C:cytoplasm"/>
    <property type="evidence" value="ECO:0007669"/>
    <property type="project" value="UniProtKB-SubCell"/>
</dbReference>
<dbReference type="GO" id="GO:0016151">
    <property type="term" value="F:nickel cation binding"/>
    <property type="evidence" value="ECO:0007669"/>
    <property type="project" value="InterPro"/>
</dbReference>
<dbReference type="GO" id="GO:0009039">
    <property type="term" value="F:urease activity"/>
    <property type="evidence" value="ECO:0007669"/>
    <property type="project" value="UniProtKB-UniRule"/>
</dbReference>
<dbReference type="GO" id="GO:0043419">
    <property type="term" value="P:urea catabolic process"/>
    <property type="evidence" value="ECO:0007669"/>
    <property type="project" value="UniProtKB-UniRule"/>
</dbReference>
<dbReference type="CDD" id="cd00390">
    <property type="entry name" value="Urease_gamma"/>
    <property type="match status" value="1"/>
</dbReference>
<dbReference type="Gene3D" id="3.30.280.10">
    <property type="entry name" value="Urease, gamma-like subunit"/>
    <property type="match status" value="1"/>
</dbReference>
<dbReference type="HAMAP" id="MF_00739">
    <property type="entry name" value="Urease_gamma"/>
    <property type="match status" value="1"/>
</dbReference>
<dbReference type="InterPro" id="IPR012010">
    <property type="entry name" value="Urease_gamma"/>
</dbReference>
<dbReference type="InterPro" id="IPR002026">
    <property type="entry name" value="Urease_gamma/gamma-beta_su"/>
</dbReference>
<dbReference type="InterPro" id="IPR036463">
    <property type="entry name" value="Urease_gamma_sf"/>
</dbReference>
<dbReference type="InterPro" id="IPR050069">
    <property type="entry name" value="Urease_subunit"/>
</dbReference>
<dbReference type="NCBIfam" id="NF009712">
    <property type="entry name" value="PRK13241.1"/>
    <property type="match status" value="1"/>
</dbReference>
<dbReference type="NCBIfam" id="TIGR00193">
    <property type="entry name" value="urease_gam"/>
    <property type="match status" value="1"/>
</dbReference>
<dbReference type="PANTHER" id="PTHR33569">
    <property type="entry name" value="UREASE"/>
    <property type="match status" value="1"/>
</dbReference>
<dbReference type="PANTHER" id="PTHR33569:SF1">
    <property type="entry name" value="UREASE"/>
    <property type="match status" value="1"/>
</dbReference>
<dbReference type="Pfam" id="PF00547">
    <property type="entry name" value="Urease_gamma"/>
    <property type="match status" value="1"/>
</dbReference>
<dbReference type="PIRSF" id="PIRSF001223">
    <property type="entry name" value="Urease_gamma"/>
    <property type="match status" value="1"/>
</dbReference>
<dbReference type="SUPFAM" id="SSF54111">
    <property type="entry name" value="Urease, gamma-subunit"/>
    <property type="match status" value="1"/>
</dbReference>
<organism>
    <name type="scientific">Staphylococcus aureus (strain USA300)</name>
    <dbReference type="NCBI Taxonomy" id="367830"/>
    <lineage>
        <taxon>Bacteria</taxon>
        <taxon>Bacillati</taxon>
        <taxon>Bacillota</taxon>
        <taxon>Bacilli</taxon>
        <taxon>Bacillales</taxon>
        <taxon>Staphylococcaceae</taxon>
        <taxon>Staphylococcus</taxon>
    </lineage>
</organism>
<evidence type="ECO:0000255" key="1">
    <source>
        <dbReference type="HAMAP-Rule" id="MF_00739"/>
    </source>
</evidence>
<name>URE3_STAA3</name>
<reference key="1">
    <citation type="journal article" date="2006" name="Lancet">
        <title>Complete genome sequence of USA300, an epidemic clone of community-acquired meticillin-resistant Staphylococcus aureus.</title>
        <authorList>
            <person name="Diep B.A."/>
            <person name="Gill S.R."/>
            <person name="Chang R.F."/>
            <person name="Phan T.H."/>
            <person name="Chen J.H."/>
            <person name="Davidson M.G."/>
            <person name="Lin F."/>
            <person name="Lin J."/>
            <person name="Carleton H.A."/>
            <person name="Mongodin E.F."/>
            <person name="Sensabaugh G.F."/>
            <person name="Perdreau-Remington F."/>
        </authorList>
    </citation>
    <scope>NUCLEOTIDE SEQUENCE [LARGE SCALE GENOMIC DNA]</scope>
    <source>
        <strain>USA300</strain>
    </source>
</reference>